<gene>
    <name evidence="1" type="primary">yciB</name>
    <name type="ordered locus">SeD_A1593</name>
</gene>
<feature type="chain" id="PRO_1000098891" description="Inner membrane-spanning protein YciB">
    <location>
        <begin position="1"/>
        <end position="179"/>
    </location>
</feature>
<feature type="transmembrane region" description="Helical" evidence="1">
    <location>
        <begin position="22"/>
        <end position="42"/>
    </location>
</feature>
<feature type="transmembrane region" description="Helical" evidence="1">
    <location>
        <begin position="50"/>
        <end position="70"/>
    </location>
</feature>
<feature type="transmembrane region" description="Helical" evidence="1">
    <location>
        <begin position="76"/>
        <end position="96"/>
    </location>
</feature>
<feature type="transmembrane region" description="Helical" evidence="1">
    <location>
        <begin position="121"/>
        <end position="141"/>
    </location>
</feature>
<feature type="transmembrane region" description="Helical" evidence="1">
    <location>
        <begin position="149"/>
        <end position="169"/>
    </location>
</feature>
<sequence>MKQFLDFLPLVVFFAFYKLYDIYAATSALIVATAIVLIYSWVRYRKIEKMALITFVLVAVFGGLTLFFHNDEFIKWKVTVIYALFAGALLISQWVMKKPLIQRMLGKELALPQQVWSKLNLAWALFFIVCGLANIYIAFWLPQNIWVNFKVFGLTALTLIFTLLSGVYIYRHLPQEDKS</sequence>
<dbReference type="EMBL" id="CP001144">
    <property type="protein sequence ID" value="ACH77177.1"/>
    <property type="molecule type" value="Genomic_DNA"/>
</dbReference>
<dbReference type="RefSeq" id="WP_000808683.1">
    <property type="nucleotide sequence ID" value="NC_011205.1"/>
</dbReference>
<dbReference type="KEGG" id="sed:SeD_A1593"/>
<dbReference type="HOGENOM" id="CLU_089554_2_0_6"/>
<dbReference type="Proteomes" id="UP000008322">
    <property type="component" value="Chromosome"/>
</dbReference>
<dbReference type="GO" id="GO:0005886">
    <property type="term" value="C:plasma membrane"/>
    <property type="evidence" value="ECO:0007669"/>
    <property type="project" value="UniProtKB-SubCell"/>
</dbReference>
<dbReference type="HAMAP" id="MF_00189">
    <property type="entry name" value="YciB"/>
    <property type="match status" value="1"/>
</dbReference>
<dbReference type="InterPro" id="IPR006008">
    <property type="entry name" value="YciB"/>
</dbReference>
<dbReference type="NCBIfam" id="TIGR00997">
    <property type="entry name" value="ispZ"/>
    <property type="match status" value="1"/>
</dbReference>
<dbReference type="NCBIfam" id="NF001324">
    <property type="entry name" value="PRK00259.1-2"/>
    <property type="match status" value="1"/>
</dbReference>
<dbReference type="NCBIfam" id="NF001325">
    <property type="entry name" value="PRK00259.1-3"/>
    <property type="match status" value="1"/>
</dbReference>
<dbReference type="NCBIfam" id="NF001326">
    <property type="entry name" value="PRK00259.1-4"/>
    <property type="match status" value="1"/>
</dbReference>
<dbReference type="PANTHER" id="PTHR36917:SF1">
    <property type="entry name" value="INNER MEMBRANE-SPANNING PROTEIN YCIB"/>
    <property type="match status" value="1"/>
</dbReference>
<dbReference type="PANTHER" id="PTHR36917">
    <property type="entry name" value="INTRACELLULAR SEPTATION PROTEIN A-RELATED"/>
    <property type="match status" value="1"/>
</dbReference>
<dbReference type="Pfam" id="PF04279">
    <property type="entry name" value="IspA"/>
    <property type="match status" value="1"/>
</dbReference>
<accession>B5FU57</accession>
<name>YCIB_SALDC</name>
<organism>
    <name type="scientific">Salmonella dublin (strain CT_02021853)</name>
    <dbReference type="NCBI Taxonomy" id="439851"/>
    <lineage>
        <taxon>Bacteria</taxon>
        <taxon>Pseudomonadati</taxon>
        <taxon>Pseudomonadota</taxon>
        <taxon>Gammaproteobacteria</taxon>
        <taxon>Enterobacterales</taxon>
        <taxon>Enterobacteriaceae</taxon>
        <taxon>Salmonella</taxon>
    </lineage>
</organism>
<proteinExistence type="inferred from homology"/>
<evidence type="ECO:0000255" key="1">
    <source>
        <dbReference type="HAMAP-Rule" id="MF_00189"/>
    </source>
</evidence>
<comment type="function">
    <text evidence="1">Plays a role in cell envelope biogenesis, maintenance of cell envelope integrity and membrane homeostasis.</text>
</comment>
<comment type="subcellular location">
    <subcellularLocation>
        <location evidence="1">Cell inner membrane</location>
        <topology evidence="1">Multi-pass membrane protein</topology>
    </subcellularLocation>
</comment>
<comment type="similarity">
    <text evidence="1">Belongs to the YciB family.</text>
</comment>
<protein>
    <recommendedName>
        <fullName evidence="1">Inner membrane-spanning protein YciB</fullName>
    </recommendedName>
</protein>
<keyword id="KW-0997">Cell inner membrane</keyword>
<keyword id="KW-1003">Cell membrane</keyword>
<keyword id="KW-0472">Membrane</keyword>
<keyword id="KW-0812">Transmembrane</keyword>
<keyword id="KW-1133">Transmembrane helix</keyword>
<reference key="1">
    <citation type="journal article" date="2011" name="J. Bacteriol.">
        <title>Comparative genomics of 28 Salmonella enterica isolates: evidence for CRISPR-mediated adaptive sublineage evolution.</title>
        <authorList>
            <person name="Fricke W.F."/>
            <person name="Mammel M.K."/>
            <person name="McDermott P.F."/>
            <person name="Tartera C."/>
            <person name="White D.G."/>
            <person name="Leclerc J.E."/>
            <person name="Ravel J."/>
            <person name="Cebula T.A."/>
        </authorList>
    </citation>
    <scope>NUCLEOTIDE SEQUENCE [LARGE SCALE GENOMIC DNA]</scope>
    <source>
        <strain>CT_02021853</strain>
    </source>
</reference>